<protein>
    <recommendedName>
        <fullName>WD repeat-containing protein 26</fullName>
    </recommendedName>
    <alternativeName>
        <fullName>CUL4- and DDB1-associated WDR protein 2</fullName>
    </alternativeName>
    <alternativeName>
        <fullName>Myocardial ischemic preconditioning up-regulated protein 2</fullName>
    </alternativeName>
</protein>
<name>WDR26_HUMAN</name>
<evidence type="ECO:0000250" key="1">
    <source>
        <dbReference type="UniProtKB" id="F1LTR1"/>
    </source>
</evidence>
<evidence type="ECO:0000255" key="2">
    <source>
        <dbReference type="PROSITE-ProRule" id="PRU00058"/>
    </source>
</evidence>
<evidence type="ECO:0000255" key="3">
    <source>
        <dbReference type="PROSITE-ProRule" id="PRU00126"/>
    </source>
</evidence>
<evidence type="ECO:0000256" key="4">
    <source>
        <dbReference type="SAM" id="MobiDB-lite"/>
    </source>
</evidence>
<evidence type="ECO:0000269" key="5">
    <source>
    </source>
</evidence>
<evidence type="ECO:0000269" key="6">
    <source>
    </source>
</evidence>
<evidence type="ECO:0000269" key="7">
    <source>
    </source>
</evidence>
<evidence type="ECO:0000269" key="8">
    <source>
    </source>
</evidence>
<evidence type="ECO:0000269" key="9">
    <source>
    </source>
</evidence>
<evidence type="ECO:0000269" key="10">
    <source>
    </source>
</evidence>
<evidence type="ECO:0000269" key="11">
    <source>
    </source>
</evidence>
<evidence type="ECO:0000269" key="12">
    <source>
    </source>
</evidence>
<evidence type="ECO:0000269" key="13">
    <source>
    </source>
</evidence>
<evidence type="ECO:0000303" key="14">
    <source>
    </source>
</evidence>
<evidence type="ECO:0000303" key="15">
    <source ref="4"/>
</evidence>
<evidence type="ECO:0000303" key="16">
    <source ref="6"/>
</evidence>
<evidence type="ECO:0000305" key="17"/>
<evidence type="ECO:0007744" key="18">
    <source>
    </source>
</evidence>
<evidence type="ECO:0007744" key="19">
    <source>
    </source>
</evidence>
<evidence type="ECO:0007744" key="20">
    <source>
    </source>
</evidence>
<evidence type="ECO:0007744" key="21">
    <source>
    </source>
</evidence>
<evidence type="ECO:0007744" key="22">
    <source>
    </source>
</evidence>
<evidence type="ECO:0007829" key="23">
    <source>
        <dbReference type="PDB" id="8QBN"/>
    </source>
</evidence>
<accession>Q9H7D7</accession>
<accession>A0MNN3</accession>
<accession>Q4G100</accession>
<accession>Q59EC4</accession>
<accession>Q5GLZ9</accession>
<accession>Q86UY4</accession>
<accession>Q9H3C2</accession>
<dbReference type="EMBL" id="AB209887">
    <property type="protein sequence ID" value="BAD93124.1"/>
    <property type="status" value="ALT_INIT"/>
    <property type="molecule type" value="mRNA"/>
</dbReference>
<dbReference type="EMBL" id="AC099790">
    <property type="status" value="NOT_ANNOTATED_CDS"/>
    <property type="molecule type" value="Genomic_DNA"/>
</dbReference>
<dbReference type="EMBL" id="BC031471">
    <property type="protein sequence ID" value="AAH31471.2"/>
    <property type="molecule type" value="mRNA"/>
</dbReference>
<dbReference type="EMBL" id="BC034498">
    <property type="protein sequence ID" value="AAH34498.1"/>
    <property type="molecule type" value="mRNA"/>
</dbReference>
<dbReference type="EMBL" id="BC052301">
    <property type="protein sequence ID" value="AAH52301.2"/>
    <property type="status" value="ALT_INIT"/>
    <property type="molecule type" value="mRNA"/>
</dbReference>
<dbReference type="EMBL" id="BC063817">
    <property type="protein sequence ID" value="AAH63817.2"/>
    <property type="status" value="ALT_INIT"/>
    <property type="molecule type" value="mRNA"/>
</dbReference>
<dbReference type="EMBL" id="AY221751">
    <property type="protein sequence ID" value="AAO67709.1"/>
    <property type="status" value="ALT_INIT"/>
    <property type="molecule type" value="mRNA"/>
</dbReference>
<dbReference type="EMBL" id="AY304473">
    <property type="protein sequence ID" value="AAQ74770.1"/>
    <property type="status" value="ALT_INIT"/>
    <property type="molecule type" value="mRNA"/>
</dbReference>
<dbReference type="EMBL" id="AF130049">
    <property type="protein sequence ID" value="AAG35477.1"/>
    <property type="status" value="ALT_INIT"/>
    <property type="molecule type" value="mRNA"/>
</dbReference>
<dbReference type="EMBL" id="EF011612">
    <property type="protein sequence ID" value="ABK41102.1"/>
    <property type="status" value="ALT_INIT"/>
    <property type="molecule type" value="mRNA"/>
</dbReference>
<dbReference type="EMBL" id="AK024669">
    <property type="protein sequence ID" value="BAB14955.1"/>
    <property type="status" value="ALT_SEQ"/>
    <property type="molecule type" value="mRNA"/>
</dbReference>
<dbReference type="CCDS" id="CCDS31037.2">
    <molecule id="Q9H7D7-1"/>
</dbReference>
<dbReference type="RefSeq" id="NP_001108585.2">
    <molecule id="Q9H7D7-2"/>
    <property type="nucleotide sequence ID" value="NM_001115113.3"/>
</dbReference>
<dbReference type="RefSeq" id="NP_079436.4">
    <molecule id="Q9H7D7-1"/>
    <property type="nucleotide sequence ID" value="NM_025160.6"/>
</dbReference>
<dbReference type="PDB" id="8QBN">
    <property type="method" value="EM"/>
    <property type="resolution" value="3.20 A"/>
    <property type="chains" value="7/W=1-661"/>
</dbReference>
<dbReference type="PDB" id="8QE8">
    <property type="method" value="EM"/>
    <property type="resolution" value="3.80 A"/>
    <property type="chains" value="A/B=1-661"/>
</dbReference>
<dbReference type="PDBsum" id="8QBN"/>
<dbReference type="PDBsum" id="8QE8"/>
<dbReference type="EMDB" id="EMD-13206"/>
<dbReference type="EMDB" id="EMD-13207"/>
<dbReference type="EMDB" id="EMD-13209"/>
<dbReference type="EMDB" id="EMD-13210"/>
<dbReference type="EMDB" id="EMD-18316"/>
<dbReference type="EMDB" id="EMD-18345"/>
<dbReference type="SMR" id="Q9H7D7"/>
<dbReference type="BioGRID" id="123195">
    <property type="interactions" value="198"/>
</dbReference>
<dbReference type="ComplexPortal" id="CPX-7901">
    <property type="entry name" value="GID E3 ubiquitin ligase complex, RMND5B-RANBP9 variant"/>
</dbReference>
<dbReference type="ComplexPortal" id="CPX-7902">
    <property type="entry name" value="GID E3 ubiquitin ligase complex, RMND5A-RANBP10 variant"/>
</dbReference>
<dbReference type="ComplexPortal" id="CPX-7903">
    <property type="entry name" value="GID E3 ubiquitin ligase complex, RMND5B-RANBP10 variant"/>
</dbReference>
<dbReference type="ComplexPortal" id="CPX-876">
    <property type="entry name" value="GID E3 ubiquitin ligase complex, RMND5A-RANBP9 variant"/>
</dbReference>
<dbReference type="CORUM" id="Q9H7D7"/>
<dbReference type="FunCoup" id="Q9H7D7">
    <property type="interactions" value="2844"/>
</dbReference>
<dbReference type="IntAct" id="Q9H7D7">
    <property type="interactions" value="114"/>
</dbReference>
<dbReference type="MINT" id="Q9H7D7"/>
<dbReference type="STRING" id="9606.ENSP00000498603"/>
<dbReference type="GlyGen" id="Q9H7D7">
    <property type="glycosylation" value="1 site, 1 O-linked glycan (1 site)"/>
</dbReference>
<dbReference type="iPTMnet" id="Q9H7D7"/>
<dbReference type="PhosphoSitePlus" id="Q9H7D7"/>
<dbReference type="BioMuta" id="WDR26"/>
<dbReference type="DMDM" id="134047967"/>
<dbReference type="jPOST" id="Q9H7D7"/>
<dbReference type="MassIVE" id="Q9H7D7"/>
<dbReference type="PaxDb" id="9606-ENSP00000408108"/>
<dbReference type="PeptideAtlas" id="Q9H7D7"/>
<dbReference type="ProteomicsDB" id="81109">
    <molecule id="Q9H7D7-1"/>
</dbReference>
<dbReference type="ProteomicsDB" id="81110">
    <molecule id="Q9H7D7-2"/>
</dbReference>
<dbReference type="ProteomicsDB" id="81111">
    <molecule id="Q9H7D7-3"/>
</dbReference>
<dbReference type="ProteomicsDB" id="81112">
    <molecule id="Q9H7D7-4"/>
</dbReference>
<dbReference type="Pumba" id="Q9H7D7"/>
<dbReference type="Antibodypedia" id="34639">
    <property type="antibodies" value="93 antibodies from 18 providers"/>
</dbReference>
<dbReference type="DNASU" id="80232"/>
<dbReference type="Ensembl" id="ENST00000678917.1">
    <molecule id="Q9H7D7-1"/>
    <property type="protein sequence ID" value="ENSP00000504428.1"/>
    <property type="gene ID" value="ENSG00000162923.18"/>
</dbReference>
<dbReference type="GeneID" id="80232"/>
<dbReference type="KEGG" id="hsa:80232"/>
<dbReference type="UCSC" id="uc001hop.4">
    <molecule id="Q9H7D7-1"/>
    <property type="organism name" value="human"/>
</dbReference>
<dbReference type="AGR" id="HGNC:21208"/>
<dbReference type="CTD" id="80232"/>
<dbReference type="DisGeNET" id="80232"/>
<dbReference type="GeneCards" id="WDR26"/>
<dbReference type="GeneReviews" id="WDR26"/>
<dbReference type="HGNC" id="HGNC:21208">
    <property type="gene designation" value="WDR26"/>
</dbReference>
<dbReference type="HPA" id="ENSG00000162923">
    <property type="expression patterns" value="Low tissue specificity"/>
</dbReference>
<dbReference type="MalaCards" id="WDR26"/>
<dbReference type="MIM" id="617424">
    <property type="type" value="gene"/>
</dbReference>
<dbReference type="MIM" id="617616">
    <property type="type" value="phenotype"/>
</dbReference>
<dbReference type="neXtProt" id="NX_Q9H7D7"/>
<dbReference type="OpenTargets" id="ENSG00000162923"/>
<dbReference type="Orphanet" id="513456">
    <property type="disease" value="Intellectual disability-seizures-abnormal gait-facial dysmorphism syndrome"/>
</dbReference>
<dbReference type="PharmGKB" id="PA134907873"/>
<dbReference type="VEuPathDB" id="HostDB:ENSG00000162923"/>
<dbReference type="eggNOG" id="KOG0293">
    <property type="taxonomic scope" value="Eukaryota"/>
</dbReference>
<dbReference type="GeneTree" id="ENSGT00940000153634"/>
<dbReference type="HOGENOM" id="CLU_000288_57_25_1"/>
<dbReference type="InParanoid" id="Q9H7D7"/>
<dbReference type="OrthoDB" id="972532at2759"/>
<dbReference type="PAN-GO" id="Q9H7D7">
    <property type="GO annotations" value="2 GO annotations based on evolutionary models"/>
</dbReference>
<dbReference type="PhylomeDB" id="Q9H7D7"/>
<dbReference type="TreeFam" id="TF314869"/>
<dbReference type="PathwayCommons" id="Q9H7D7"/>
<dbReference type="Reactome" id="R-HSA-9861718">
    <property type="pathway name" value="Regulation of pyruvate metabolism"/>
</dbReference>
<dbReference type="SignaLink" id="Q9H7D7"/>
<dbReference type="BioGRID-ORCS" id="80232">
    <property type="hits" value="316 hits in 1156 CRISPR screens"/>
</dbReference>
<dbReference type="ChiTaRS" id="WDR26">
    <property type="organism name" value="human"/>
</dbReference>
<dbReference type="GeneWiki" id="WDR26"/>
<dbReference type="GenomeRNAi" id="80232"/>
<dbReference type="Pharos" id="Q9H7D7">
    <property type="development level" value="Tbio"/>
</dbReference>
<dbReference type="PRO" id="PR:Q9H7D7"/>
<dbReference type="Proteomes" id="UP000005640">
    <property type="component" value="Chromosome 1"/>
</dbReference>
<dbReference type="RNAct" id="Q9H7D7">
    <property type="molecule type" value="protein"/>
</dbReference>
<dbReference type="Bgee" id="ENSG00000162923">
    <property type="expression patterns" value="Expressed in sperm and 200 other cell types or tissues"/>
</dbReference>
<dbReference type="ExpressionAtlas" id="Q9H7D7">
    <property type="expression patterns" value="baseline and differential"/>
</dbReference>
<dbReference type="GO" id="GO:0005737">
    <property type="term" value="C:cytoplasm"/>
    <property type="evidence" value="ECO:0000314"/>
    <property type="project" value="UniProtKB"/>
</dbReference>
<dbReference type="GO" id="GO:0005829">
    <property type="term" value="C:cytosol"/>
    <property type="evidence" value="ECO:0000314"/>
    <property type="project" value="HPA"/>
</dbReference>
<dbReference type="GO" id="GO:0034657">
    <property type="term" value="C:GID complex"/>
    <property type="evidence" value="ECO:0000318"/>
    <property type="project" value="GO_Central"/>
</dbReference>
<dbReference type="GO" id="GO:0005739">
    <property type="term" value="C:mitochondrion"/>
    <property type="evidence" value="ECO:0000314"/>
    <property type="project" value="HPA"/>
</dbReference>
<dbReference type="GO" id="GO:0005654">
    <property type="term" value="C:nucleoplasm"/>
    <property type="evidence" value="ECO:0000314"/>
    <property type="project" value="HPA"/>
</dbReference>
<dbReference type="GO" id="GO:0005634">
    <property type="term" value="C:nucleus"/>
    <property type="evidence" value="ECO:0000314"/>
    <property type="project" value="UniProtKB"/>
</dbReference>
<dbReference type="GO" id="GO:0000151">
    <property type="term" value="C:ubiquitin ligase complex"/>
    <property type="evidence" value="ECO:0000314"/>
    <property type="project" value="UniProtKB"/>
</dbReference>
<dbReference type="GO" id="GO:0043161">
    <property type="term" value="P:proteasome-mediated ubiquitin-dependent protein catabolic process"/>
    <property type="evidence" value="ECO:0000318"/>
    <property type="project" value="GO_Central"/>
</dbReference>
<dbReference type="CDD" id="cd00200">
    <property type="entry name" value="WD40"/>
    <property type="match status" value="1"/>
</dbReference>
<dbReference type="FunFam" id="2.130.10.10:FF:000087">
    <property type="entry name" value="WD repeat-containing protein 26 homolog"/>
    <property type="match status" value="1"/>
</dbReference>
<dbReference type="Gene3D" id="2.130.10.10">
    <property type="entry name" value="YVTN repeat-like/Quinoprotein amine dehydrogenase"/>
    <property type="match status" value="1"/>
</dbReference>
<dbReference type="InterPro" id="IPR006595">
    <property type="entry name" value="CTLH_C"/>
</dbReference>
<dbReference type="InterPro" id="IPR006594">
    <property type="entry name" value="LisH"/>
</dbReference>
<dbReference type="InterPro" id="IPR054532">
    <property type="entry name" value="TPL_SMU1_LisH-like"/>
</dbReference>
<dbReference type="InterPro" id="IPR015943">
    <property type="entry name" value="WD40/YVTN_repeat-like_dom_sf"/>
</dbReference>
<dbReference type="InterPro" id="IPR036322">
    <property type="entry name" value="WD40_repeat_dom_sf"/>
</dbReference>
<dbReference type="InterPro" id="IPR001680">
    <property type="entry name" value="WD40_rpt"/>
</dbReference>
<dbReference type="InterPro" id="IPR051350">
    <property type="entry name" value="WD_repeat-ST_regulator"/>
</dbReference>
<dbReference type="PANTHER" id="PTHR22838">
    <property type="entry name" value="WD REPEAT PROTEIN 26-RELATED"/>
    <property type="match status" value="1"/>
</dbReference>
<dbReference type="PANTHER" id="PTHR22838:SF0">
    <property type="entry name" value="WD REPEAT-CONTAINING PROTEIN 26"/>
    <property type="match status" value="1"/>
</dbReference>
<dbReference type="Pfam" id="PF17814">
    <property type="entry name" value="LisH_TPL"/>
    <property type="match status" value="1"/>
</dbReference>
<dbReference type="Pfam" id="PF00400">
    <property type="entry name" value="WD40"/>
    <property type="match status" value="5"/>
</dbReference>
<dbReference type="SMART" id="SM00668">
    <property type="entry name" value="CTLH"/>
    <property type="match status" value="1"/>
</dbReference>
<dbReference type="SMART" id="SM00320">
    <property type="entry name" value="WD40"/>
    <property type="match status" value="5"/>
</dbReference>
<dbReference type="SUPFAM" id="SSF50978">
    <property type="entry name" value="WD40 repeat-like"/>
    <property type="match status" value="1"/>
</dbReference>
<dbReference type="PROSITE" id="PS50897">
    <property type="entry name" value="CTLH"/>
    <property type="match status" value="1"/>
</dbReference>
<dbReference type="PROSITE" id="PS50896">
    <property type="entry name" value="LISH"/>
    <property type="match status" value="1"/>
</dbReference>
<dbReference type="PROSITE" id="PS50082">
    <property type="entry name" value="WD_REPEATS_2"/>
    <property type="match status" value="3"/>
</dbReference>
<dbReference type="PROSITE" id="PS50294">
    <property type="entry name" value="WD_REPEATS_REGION"/>
    <property type="match status" value="1"/>
</dbReference>
<proteinExistence type="evidence at protein level"/>
<feature type="chain" id="PRO_0000051373" description="WD repeat-containing protein 26">
    <location>
        <begin position="1"/>
        <end position="661"/>
    </location>
</feature>
<feature type="domain" description="LisH" evidence="3">
    <location>
        <begin position="123"/>
        <end position="155"/>
    </location>
</feature>
<feature type="domain" description="CTLH" evidence="2">
    <location>
        <begin position="156"/>
        <end position="231"/>
    </location>
</feature>
<feature type="repeat" description="WD 1">
    <location>
        <begin position="353"/>
        <end position="392"/>
    </location>
</feature>
<feature type="repeat" description="WD 2">
    <location>
        <begin position="399"/>
        <end position="438"/>
    </location>
</feature>
<feature type="repeat" description="WD 3">
    <location>
        <begin position="444"/>
        <end position="484"/>
    </location>
</feature>
<feature type="repeat" description="WD 4">
    <location>
        <begin position="524"/>
        <end position="563"/>
    </location>
</feature>
<feature type="repeat" description="WD 5">
    <location>
        <begin position="566"/>
        <end position="608"/>
    </location>
</feature>
<feature type="repeat" description="WD 6">
    <location>
        <begin position="611"/>
        <end position="651"/>
    </location>
</feature>
<feature type="region of interest" description="Disordered" evidence="4">
    <location>
        <begin position="1"/>
        <end position="70"/>
    </location>
</feature>
<feature type="region of interest" description="Disordered" evidence="4">
    <location>
        <begin position="99"/>
        <end position="118"/>
    </location>
</feature>
<feature type="compositionally biased region" description="Gly residues" evidence="4">
    <location>
        <begin position="1"/>
        <end position="27"/>
    </location>
</feature>
<feature type="compositionally biased region" description="Low complexity" evidence="4">
    <location>
        <begin position="56"/>
        <end position="70"/>
    </location>
</feature>
<feature type="compositionally biased region" description="Low complexity" evidence="4">
    <location>
        <begin position="99"/>
        <end position="113"/>
    </location>
</feature>
<feature type="modified residue" description="Phosphoserine" evidence="18 19 20 21 22">
    <location>
        <position position="121"/>
    </location>
</feature>
<feature type="modified residue" description="Phosphoserine" evidence="21 22">
    <location>
        <position position="123"/>
    </location>
</feature>
<feature type="splice variant" id="VSP_023895" description="In isoform 2." evidence="15">
    <location>
        <begin position="192"/>
        <end position="207"/>
    </location>
</feature>
<feature type="splice variant" id="VSP_023896" description="In isoform 3." evidence="14">
    <original>VRGALEISQTLLGIIVRMKFLLL</original>
    <variation>AQTFSETSINFFPLTAAFCHVRG</variation>
    <location>
        <begin position="194"/>
        <end position="216"/>
    </location>
</feature>
<feature type="splice variant" id="VSP_023897" description="In isoform 4." evidence="16">
    <original>RMKFLLLQQKYLEY</original>
    <variation>VNTLLFLVSHLCLF</variation>
    <location>
        <begin position="210"/>
        <end position="223"/>
    </location>
</feature>
<feature type="splice variant" id="VSP_023898" description="In isoform 3." evidence="14">
    <location>
        <begin position="217"/>
        <end position="661"/>
    </location>
</feature>
<feature type="splice variant" id="VSP_023899" description="In isoform 4." evidence="16">
    <location>
        <begin position="224"/>
        <end position="661"/>
    </location>
</feature>
<feature type="sequence variant" id="VAR_079297" description="In SKDEAS." evidence="12">
    <location>
        <begin position="46"/>
        <end position="661"/>
    </location>
</feature>
<feature type="sequence variant" id="VAR_079298" description="In SKDEAS; uncertain significance." evidence="12">
    <original>W</original>
    <variation>R</variation>
    <location>
        <position position="172"/>
    </location>
</feature>
<feature type="sequence variant" id="VAR_079299" description="In SKDEAS; uncertain significance." evidence="12">
    <original>L</original>
    <variation>P</variation>
    <location>
        <position position="215"/>
    </location>
</feature>
<feature type="sequence variant" id="VAR_079300" description="In SKDEAS; uncertain significance; dbSNP:rs150512167." evidence="12">
    <original>S</original>
    <variation>R</variation>
    <location>
        <position position="254"/>
    </location>
</feature>
<feature type="sequence variant" id="VAR_079301" description="In SKDEAS; uncertain significance." evidence="12">
    <location>
        <begin position="279"/>
        <end position="661"/>
    </location>
</feature>
<feature type="sequence variant" id="VAR_079302" description="In SKDEAS; uncertain significance; slightly decreased protein expression;; dbSNP:rs1553359384." evidence="12">
    <original>D</original>
    <variation>N</variation>
    <location>
        <position position="284"/>
    </location>
</feature>
<feature type="sequence variant" id="VAR_079303" description="In SKDEAS." evidence="12">
    <location>
        <begin position="426"/>
        <end position="661"/>
    </location>
</feature>
<feature type="sequence variant" id="VAR_079304" description="In SKDEAS." evidence="12">
    <location>
        <begin position="428"/>
        <end position="661"/>
    </location>
</feature>
<feature type="sequence variant" id="VAR_079305" description="In SKDEAS." evidence="12">
    <location>
        <begin position="524"/>
        <end position="661"/>
    </location>
</feature>
<feature type="sequence conflict" description="In Ref. 3; AAH34498." evidence="17" ref="3">
    <original>G</original>
    <variation>A</variation>
    <location>
        <position position="8"/>
    </location>
</feature>
<feature type="helix" evidence="23">
    <location>
        <begin position="122"/>
        <end position="138"/>
    </location>
</feature>
<feature type="helix" evidence="23">
    <location>
        <begin position="143"/>
        <end position="151"/>
    </location>
</feature>
<feature type="helix" evidence="23">
    <location>
        <begin position="300"/>
        <end position="314"/>
    </location>
</feature>
<feature type="strand" evidence="23">
    <location>
        <begin position="332"/>
        <end position="334"/>
    </location>
</feature>
<feature type="helix" evidence="23">
    <location>
        <begin position="340"/>
        <end position="342"/>
    </location>
</feature>
<feature type="strand" evidence="23">
    <location>
        <begin position="346"/>
        <end position="351"/>
    </location>
</feature>
<feature type="strand" evidence="23">
    <location>
        <begin position="358"/>
        <end position="363"/>
    </location>
</feature>
<feature type="strand" evidence="23">
    <location>
        <begin position="367"/>
        <end position="377"/>
    </location>
</feature>
<feature type="strand" evidence="23">
    <location>
        <begin position="379"/>
        <end position="384"/>
    </location>
</feature>
<feature type="turn" evidence="23">
    <location>
        <begin position="386"/>
        <end position="388"/>
    </location>
</feature>
<feature type="strand" evidence="23">
    <location>
        <begin position="391"/>
        <end position="397"/>
    </location>
</feature>
<feature type="strand" evidence="23">
    <location>
        <begin position="406"/>
        <end position="409"/>
    </location>
</feature>
<feature type="strand" evidence="23">
    <location>
        <begin position="413"/>
        <end position="419"/>
    </location>
</feature>
<feature type="strand" evidence="23">
    <location>
        <begin position="427"/>
        <end position="431"/>
    </location>
</feature>
<feature type="turn" evidence="23">
    <location>
        <begin position="432"/>
        <end position="434"/>
    </location>
</feature>
<feature type="strand" evidence="23">
    <location>
        <begin position="451"/>
        <end position="454"/>
    </location>
</feature>
<feature type="strand" evidence="23">
    <location>
        <begin position="458"/>
        <end position="464"/>
    </location>
</feature>
<feature type="strand" evidence="23">
    <location>
        <begin position="470"/>
        <end position="474"/>
    </location>
</feature>
<feature type="strand" evidence="23">
    <location>
        <begin position="479"/>
        <end position="482"/>
    </location>
</feature>
<feature type="strand" evidence="23">
    <location>
        <begin position="489"/>
        <end position="493"/>
    </location>
</feature>
<feature type="strand" evidence="23">
    <location>
        <begin position="497"/>
        <end position="503"/>
    </location>
</feature>
<feature type="strand" evidence="23">
    <location>
        <begin position="507"/>
        <end position="513"/>
    </location>
</feature>
<feature type="turn" evidence="23">
    <location>
        <begin position="514"/>
        <end position="517"/>
    </location>
</feature>
<feature type="strand" evidence="23">
    <location>
        <begin position="518"/>
        <end position="524"/>
    </location>
</feature>
<feature type="strand" evidence="23">
    <location>
        <begin position="529"/>
        <end position="534"/>
    </location>
</feature>
<feature type="strand" evidence="23">
    <location>
        <begin position="540"/>
        <end position="545"/>
    </location>
</feature>
<feature type="strand" evidence="23">
    <location>
        <begin position="550"/>
        <end position="554"/>
    </location>
</feature>
<feature type="turn" evidence="23">
    <location>
        <begin position="555"/>
        <end position="558"/>
    </location>
</feature>
<feature type="strand" evidence="23">
    <location>
        <begin position="559"/>
        <end position="564"/>
    </location>
</feature>
<feature type="strand" evidence="23">
    <location>
        <begin position="570"/>
        <end position="572"/>
    </location>
</feature>
<feature type="strand" evidence="23">
    <location>
        <begin position="576"/>
        <end position="583"/>
    </location>
</feature>
<feature type="strand" evidence="23">
    <location>
        <begin position="585"/>
        <end position="588"/>
    </location>
</feature>
<feature type="strand" evidence="23">
    <location>
        <begin position="595"/>
        <end position="599"/>
    </location>
</feature>
<feature type="strand" evidence="23">
    <location>
        <begin position="606"/>
        <end position="609"/>
    </location>
</feature>
<feature type="strand" evidence="23">
    <location>
        <begin position="616"/>
        <end position="621"/>
    </location>
</feature>
<feature type="strand" evidence="23">
    <location>
        <begin position="629"/>
        <end position="633"/>
    </location>
</feature>
<feature type="strand" evidence="23">
    <location>
        <begin position="638"/>
        <end position="642"/>
    </location>
</feature>
<reference key="1">
    <citation type="submission" date="2005-03" db="EMBL/GenBank/DDBJ databases">
        <authorList>
            <person name="Totoki Y."/>
            <person name="Toyoda A."/>
            <person name="Takeda T."/>
            <person name="Sakaki Y."/>
            <person name="Tanaka A."/>
            <person name="Yokoyama S."/>
            <person name="Ohara O."/>
            <person name="Nagase T."/>
            <person name="Kikuno R.F."/>
        </authorList>
    </citation>
    <scope>NUCLEOTIDE SEQUENCE [LARGE SCALE MRNA] (ISOFORM 1)</scope>
    <source>
        <tissue>Endothelial cell</tissue>
    </source>
</reference>
<reference key="2">
    <citation type="journal article" date="2006" name="Nature">
        <title>The DNA sequence and biological annotation of human chromosome 1.</title>
        <authorList>
            <person name="Gregory S.G."/>
            <person name="Barlow K.F."/>
            <person name="McLay K.E."/>
            <person name="Kaul R."/>
            <person name="Swarbreck D."/>
            <person name="Dunham A."/>
            <person name="Scott C.E."/>
            <person name="Howe K.L."/>
            <person name="Woodfine K."/>
            <person name="Spencer C.C.A."/>
            <person name="Jones M.C."/>
            <person name="Gillson C."/>
            <person name="Searle S."/>
            <person name="Zhou Y."/>
            <person name="Kokocinski F."/>
            <person name="McDonald L."/>
            <person name="Evans R."/>
            <person name="Phillips K."/>
            <person name="Atkinson A."/>
            <person name="Cooper R."/>
            <person name="Jones C."/>
            <person name="Hall R.E."/>
            <person name="Andrews T.D."/>
            <person name="Lloyd C."/>
            <person name="Ainscough R."/>
            <person name="Almeida J.P."/>
            <person name="Ambrose K.D."/>
            <person name="Anderson F."/>
            <person name="Andrew R.W."/>
            <person name="Ashwell R.I.S."/>
            <person name="Aubin K."/>
            <person name="Babbage A.K."/>
            <person name="Bagguley C.L."/>
            <person name="Bailey J."/>
            <person name="Beasley H."/>
            <person name="Bethel G."/>
            <person name="Bird C.P."/>
            <person name="Bray-Allen S."/>
            <person name="Brown J.Y."/>
            <person name="Brown A.J."/>
            <person name="Buckley D."/>
            <person name="Burton J."/>
            <person name="Bye J."/>
            <person name="Carder C."/>
            <person name="Chapman J.C."/>
            <person name="Clark S.Y."/>
            <person name="Clarke G."/>
            <person name="Clee C."/>
            <person name="Cobley V."/>
            <person name="Collier R.E."/>
            <person name="Corby N."/>
            <person name="Coville G.J."/>
            <person name="Davies J."/>
            <person name="Deadman R."/>
            <person name="Dunn M."/>
            <person name="Earthrowl M."/>
            <person name="Ellington A.G."/>
            <person name="Errington H."/>
            <person name="Frankish A."/>
            <person name="Frankland J."/>
            <person name="French L."/>
            <person name="Garner P."/>
            <person name="Garnett J."/>
            <person name="Gay L."/>
            <person name="Ghori M.R.J."/>
            <person name="Gibson R."/>
            <person name="Gilby L.M."/>
            <person name="Gillett W."/>
            <person name="Glithero R.J."/>
            <person name="Grafham D.V."/>
            <person name="Griffiths C."/>
            <person name="Griffiths-Jones S."/>
            <person name="Grocock R."/>
            <person name="Hammond S."/>
            <person name="Harrison E.S.I."/>
            <person name="Hart E."/>
            <person name="Haugen E."/>
            <person name="Heath P.D."/>
            <person name="Holmes S."/>
            <person name="Holt K."/>
            <person name="Howden P.J."/>
            <person name="Hunt A.R."/>
            <person name="Hunt S.E."/>
            <person name="Hunter G."/>
            <person name="Isherwood J."/>
            <person name="James R."/>
            <person name="Johnson C."/>
            <person name="Johnson D."/>
            <person name="Joy A."/>
            <person name="Kay M."/>
            <person name="Kershaw J.K."/>
            <person name="Kibukawa M."/>
            <person name="Kimberley A.M."/>
            <person name="King A."/>
            <person name="Knights A.J."/>
            <person name="Lad H."/>
            <person name="Laird G."/>
            <person name="Lawlor S."/>
            <person name="Leongamornlert D.A."/>
            <person name="Lloyd D.M."/>
            <person name="Loveland J."/>
            <person name="Lovell J."/>
            <person name="Lush M.J."/>
            <person name="Lyne R."/>
            <person name="Martin S."/>
            <person name="Mashreghi-Mohammadi M."/>
            <person name="Matthews L."/>
            <person name="Matthews N.S.W."/>
            <person name="McLaren S."/>
            <person name="Milne S."/>
            <person name="Mistry S."/>
            <person name="Moore M.J.F."/>
            <person name="Nickerson T."/>
            <person name="O'Dell C.N."/>
            <person name="Oliver K."/>
            <person name="Palmeiri A."/>
            <person name="Palmer S.A."/>
            <person name="Parker A."/>
            <person name="Patel D."/>
            <person name="Pearce A.V."/>
            <person name="Peck A.I."/>
            <person name="Pelan S."/>
            <person name="Phelps K."/>
            <person name="Phillimore B.J."/>
            <person name="Plumb R."/>
            <person name="Rajan J."/>
            <person name="Raymond C."/>
            <person name="Rouse G."/>
            <person name="Saenphimmachak C."/>
            <person name="Sehra H.K."/>
            <person name="Sheridan E."/>
            <person name="Shownkeen R."/>
            <person name="Sims S."/>
            <person name="Skuce C.D."/>
            <person name="Smith M."/>
            <person name="Steward C."/>
            <person name="Subramanian S."/>
            <person name="Sycamore N."/>
            <person name="Tracey A."/>
            <person name="Tromans A."/>
            <person name="Van Helmond Z."/>
            <person name="Wall M."/>
            <person name="Wallis J.M."/>
            <person name="White S."/>
            <person name="Whitehead S.L."/>
            <person name="Wilkinson J.E."/>
            <person name="Willey D.L."/>
            <person name="Williams H."/>
            <person name="Wilming L."/>
            <person name="Wray P.W."/>
            <person name="Wu Z."/>
            <person name="Coulson A."/>
            <person name="Vaudin M."/>
            <person name="Sulston J.E."/>
            <person name="Durbin R.M."/>
            <person name="Hubbard T."/>
            <person name="Wooster R."/>
            <person name="Dunham I."/>
            <person name="Carter N.P."/>
            <person name="McVean G."/>
            <person name="Ross M.T."/>
            <person name="Harrow J."/>
            <person name="Olson M.V."/>
            <person name="Beck S."/>
            <person name="Rogers J."/>
            <person name="Bentley D.R."/>
        </authorList>
    </citation>
    <scope>NUCLEOTIDE SEQUENCE [LARGE SCALE GENOMIC DNA]</scope>
</reference>
<reference key="3">
    <citation type="journal article" date="2004" name="Genome Res.">
        <title>The status, quality, and expansion of the NIH full-length cDNA project: the Mammalian Gene Collection (MGC).</title>
        <authorList>
            <consortium name="The MGC Project Team"/>
        </authorList>
    </citation>
    <scope>NUCLEOTIDE SEQUENCE [LARGE SCALE MRNA] OF 8-661 (ISOFORM 3)</scope>
    <scope>NUCLEOTIDE SEQUENCE [LARGE SCALE MRNA] OF 138-661 (ISOFORM 1)</scope>
    <source>
        <tissue>Lung</tissue>
        <tissue>Testis</tissue>
        <tissue>Uterus</tissue>
    </source>
</reference>
<reference key="4">
    <citation type="submission" date="2003-01" db="EMBL/GenBank/DDBJ databases">
        <title>Human myocardial ischemic preconditioning upregulated gene 2.</title>
        <authorList>
            <person name="Yuan C."/>
            <person name="Xiao X."/>
            <person name="Zhang H."/>
        </authorList>
    </citation>
    <scope>NUCLEOTIDE SEQUENCE [MRNA] OF 25-661 (ISOFORM 2)</scope>
</reference>
<reference key="5">
    <citation type="journal article" date="2004" name="J. Cell. Biochem.">
        <title>WDR26: a novel Gbeta-like protein, suppresses MAPK signaling pathway.</title>
        <authorList>
            <person name="Zhu Y."/>
            <person name="Wang Y."/>
            <person name="Xia C."/>
            <person name="Li D."/>
            <person name="Li Y."/>
            <person name="Zeng W."/>
            <person name="Yuan W."/>
            <person name="Liu H."/>
            <person name="Zhu C."/>
            <person name="Wu X."/>
            <person name="Liu M."/>
        </authorList>
    </citation>
    <scope>NUCLEOTIDE SEQUENCE [MRNA] OF 84-661 (ISOFORM 1)</scope>
    <scope>TISSUE SPECIFICITY</scope>
    <scope>FUNCTION</scope>
    <scope>SUBCELLULAR LOCATION</scope>
    <source>
        <tissue>Heart</tissue>
    </source>
</reference>
<reference key="6">
    <citation type="submission" date="1999-02" db="EMBL/GenBank/DDBJ databases">
        <title>Functional prediction of the coding sequences of 75 new genes deduced by analysis of cDNA clones from human fetal liver.</title>
        <authorList>
            <person name="Zhang C."/>
            <person name="Yu Y."/>
            <person name="Zhang S."/>
            <person name="Wei H."/>
            <person name="Bi J."/>
            <person name="Zhou G."/>
            <person name="Dong C."/>
            <person name="Zai Y."/>
            <person name="Xu W."/>
            <person name="Gao F."/>
            <person name="Liu M."/>
            <person name="He F."/>
        </authorList>
    </citation>
    <scope>NUCLEOTIDE SEQUENCE [LARGE SCALE MRNA] OF 86-661 (ISOFORM 4)</scope>
    <source>
        <tissue>Fetal liver</tissue>
    </source>
</reference>
<reference key="7">
    <citation type="journal article" date="2006" name="Nat. Cell Biol.">
        <title>CUL4-DDB1 ubiquitin ligase interacts with multiple WD40-repeat proteins and regulates histone methylation.</title>
        <authorList>
            <person name="Higa L.A."/>
            <person name="Wu M."/>
            <person name="Ye T."/>
            <person name="Kobayashi R."/>
            <person name="Sun H."/>
            <person name="Zhang H."/>
        </authorList>
    </citation>
    <scope>NUCLEOTIDE SEQUENCE [MRNA] OF 138-661 (ISOFORM 1)</scope>
    <scope>INTERACTION WITH CUL4</scope>
    <scope>IDENTIFICATION BY MASS SPECTROMETRY</scope>
</reference>
<reference key="8">
    <citation type="journal article" date="2004" name="Nat. Genet.">
        <title>Complete sequencing and characterization of 21,243 full-length human cDNAs.</title>
        <authorList>
            <person name="Ota T."/>
            <person name="Suzuki Y."/>
            <person name="Nishikawa T."/>
            <person name="Otsuki T."/>
            <person name="Sugiyama T."/>
            <person name="Irie R."/>
            <person name="Wakamatsu A."/>
            <person name="Hayashi K."/>
            <person name="Sato H."/>
            <person name="Nagai K."/>
            <person name="Kimura K."/>
            <person name="Makita H."/>
            <person name="Sekine M."/>
            <person name="Obayashi M."/>
            <person name="Nishi T."/>
            <person name="Shibahara T."/>
            <person name="Tanaka T."/>
            <person name="Ishii S."/>
            <person name="Yamamoto J."/>
            <person name="Saito K."/>
            <person name="Kawai Y."/>
            <person name="Isono Y."/>
            <person name="Nakamura Y."/>
            <person name="Nagahari K."/>
            <person name="Murakami K."/>
            <person name="Yasuda T."/>
            <person name="Iwayanagi T."/>
            <person name="Wagatsuma M."/>
            <person name="Shiratori A."/>
            <person name="Sudo H."/>
            <person name="Hosoiri T."/>
            <person name="Kaku Y."/>
            <person name="Kodaira H."/>
            <person name="Kondo H."/>
            <person name="Sugawara M."/>
            <person name="Takahashi M."/>
            <person name="Kanda K."/>
            <person name="Yokoi T."/>
            <person name="Furuya T."/>
            <person name="Kikkawa E."/>
            <person name="Omura Y."/>
            <person name="Abe K."/>
            <person name="Kamihara K."/>
            <person name="Katsuta N."/>
            <person name="Sato K."/>
            <person name="Tanikawa M."/>
            <person name="Yamazaki M."/>
            <person name="Ninomiya K."/>
            <person name="Ishibashi T."/>
            <person name="Yamashita H."/>
            <person name="Murakawa K."/>
            <person name="Fujimori K."/>
            <person name="Tanai H."/>
            <person name="Kimata M."/>
            <person name="Watanabe M."/>
            <person name="Hiraoka S."/>
            <person name="Chiba Y."/>
            <person name="Ishida S."/>
            <person name="Ono Y."/>
            <person name="Takiguchi S."/>
            <person name="Watanabe S."/>
            <person name="Yosida M."/>
            <person name="Hotuta T."/>
            <person name="Kusano J."/>
            <person name="Kanehori K."/>
            <person name="Takahashi-Fujii A."/>
            <person name="Hara H."/>
            <person name="Tanase T.-O."/>
            <person name="Nomura Y."/>
            <person name="Togiya S."/>
            <person name="Komai F."/>
            <person name="Hara R."/>
            <person name="Takeuchi K."/>
            <person name="Arita M."/>
            <person name="Imose N."/>
            <person name="Musashino K."/>
            <person name="Yuuki H."/>
            <person name="Oshima A."/>
            <person name="Sasaki N."/>
            <person name="Aotsuka S."/>
            <person name="Yoshikawa Y."/>
            <person name="Matsunawa H."/>
            <person name="Ichihara T."/>
            <person name="Shiohata N."/>
            <person name="Sano S."/>
            <person name="Moriya S."/>
            <person name="Momiyama H."/>
            <person name="Satoh N."/>
            <person name="Takami S."/>
            <person name="Terashima Y."/>
            <person name="Suzuki O."/>
            <person name="Nakagawa S."/>
            <person name="Senoh A."/>
            <person name="Mizoguchi H."/>
            <person name="Goto Y."/>
            <person name="Shimizu F."/>
            <person name="Wakebe H."/>
            <person name="Hishigaki H."/>
            <person name="Watanabe T."/>
            <person name="Sugiyama A."/>
            <person name="Takemoto M."/>
            <person name="Kawakami B."/>
            <person name="Yamazaki M."/>
            <person name="Watanabe K."/>
            <person name="Kumagai A."/>
            <person name="Itakura S."/>
            <person name="Fukuzumi Y."/>
            <person name="Fujimori Y."/>
            <person name="Komiyama M."/>
            <person name="Tashiro H."/>
            <person name="Tanigami A."/>
            <person name="Fujiwara T."/>
            <person name="Ono T."/>
            <person name="Yamada K."/>
            <person name="Fujii Y."/>
            <person name="Ozaki K."/>
            <person name="Hirao M."/>
            <person name="Ohmori Y."/>
            <person name="Kawabata A."/>
            <person name="Hikiji T."/>
            <person name="Kobatake N."/>
            <person name="Inagaki H."/>
            <person name="Ikema Y."/>
            <person name="Okamoto S."/>
            <person name="Okitani R."/>
            <person name="Kawakami T."/>
            <person name="Noguchi S."/>
            <person name="Itoh T."/>
            <person name="Shigeta K."/>
            <person name="Senba T."/>
            <person name="Matsumura K."/>
            <person name="Nakajima Y."/>
            <person name="Mizuno T."/>
            <person name="Morinaga M."/>
            <person name="Sasaki M."/>
            <person name="Togashi T."/>
            <person name="Oyama M."/>
            <person name="Hata H."/>
            <person name="Watanabe M."/>
            <person name="Komatsu T."/>
            <person name="Mizushima-Sugano J."/>
            <person name="Satoh T."/>
            <person name="Shirai Y."/>
            <person name="Takahashi Y."/>
            <person name="Nakagawa K."/>
            <person name="Okumura K."/>
            <person name="Nagase T."/>
            <person name="Nomura N."/>
            <person name="Kikuchi H."/>
            <person name="Masuho Y."/>
            <person name="Yamashita R."/>
            <person name="Nakai K."/>
            <person name="Yada T."/>
            <person name="Nakamura Y."/>
            <person name="Ohara O."/>
            <person name="Isogai T."/>
            <person name="Sugano S."/>
        </authorList>
    </citation>
    <scope>NUCLEOTIDE SEQUENCE [LARGE SCALE MRNA] OF 265-661 (ISOFORM 1)</scope>
</reference>
<reference key="9">
    <citation type="journal article" date="2006" name="Cell">
        <title>Global, in vivo, and site-specific phosphorylation dynamics in signaling networks.</title>
        <authorList>
            <person name="Olsen J.V."/>
            <person name="Blagoev B."/>
            <person name="Gnad F."/>
            <person name="Macek B."/>
            <person name="Kumar C."/>
            <person name="Mortensen P."/>
            <person name="Mann M."/>
        </authorList>
    </citation>
    <scope>IDENTIFICATION BY MASS SPECTROMETRY [LARGE SCALE ANALYSIS]</scope>
    <source>
        <tissue>Cervix carcinoma</tissue>
    </source>
</reference>
<reference key="10">
    <citation type="journal article" date="2008" name="Proc. Natl. Acad. Sci. U.S.A.">
        <title>A quantitative atlas of mitotic phosphorylation.</title>
        <authorList>
            <person name="Dephoure N."/>
            <person name="Zhou C."/>
            <person name="Villen J."/>
            <person name="Beausoleil S.A."/>
            <person name="Bakalarski C.E."/>
            <person name="Elledge S.J."/>
            <person name="Gygi S.P."/>
        </authorList>
    </citation>
    <scope>PHOSPHORYLATION [LARGE SCALE ANALYSIS] AT SER-121</scope>
    <scope>IDENTIFICATION BY MASS SPECTROMETRY [LARGE SCALE ANALYSIS]</scope>
    <source>
        <tissue>Cervix carcinoma</tissue>
    </source>
</reference>
<reference key="11">
    <citation type="journal article" date="2009" name="Neurosci. Lett.">
        <title>A novel WD-40 repeat protein WDR26 suppresses H2O2-induced cell death in neural cells.</title>
        <authorList>
            <person name="Zhao J."/>
            <person name="Liu Y."/>
            <person name="Wei X."/>
            <person name="Yuan C."/>
            <person name="Yuan X."/>
            <person name="Xiao X."/>
        </authorList>
    </citation>
    <scope>INDUCTION</scope>
    <scope>FUNCTION</scope>
</reference>
<reference key="12">
    <citation type="journal article" date="2010" name="Sci. Signal.">
        <title>Quantitative phosphoproteomics reveals widespread full phosphorylation site occupancy during mitosis.</title>
        <authorList>
            <person name="Olsen J.V."/>
            <person name="Vermeulen M."/>
            <person name="Santamaria A."/>
            <person name="Kumar C."/>
            <person name="Miller M.L."/>
            <person name="Jensen L.J."/>
            <person name="Gnad F."/>
            <person name="Cox J."/>
            <person name="Jensen T.S."/>
            <person name="Nigg E.A."/>
            <person name="Brunak S."/>
            <person name="Mann M."/>
        </authorList>
    </citation>
    <scope>PHOSPHORYLATION [LARGE SCALE ANALYSIS] AT SER-121</scope>
    <scope>IDENTIFICATION BY MASS SPECTROMETRY [LARGE SCALE ANALYSIS]</scope>
    <source>
        <tissue>Cervix carcinoma</tissue>
    </source>
</reference>
<reference key="13">
    <citation type="journal article" date="2011" name="BMC Syst. Biol.">
        <title>Initial characterization of the human central proteome.</title>
        <authorList>
            <person name="Burkard T.R."/>
            <person name="Planyavsky M."/>
            <person name="Kaupe I."/>
            <person name="Breitwieser F.P."/>
            <person name="Buerckstuemmer T."/>
            <person name="Bennett K.L."/>
            <person name="Superti-Furga G."/>
            <person name="Colinge J."/>
        </authorList>
    </citation>
    <scope>IDENTIFICATION BY MASS SPECTROMETRY [LARGE SCALE ANALYSIS]</scope>
</reference>
<reference key="14">
    <citation type="journal article" date="2011" name="J. Biol. Chem.">
        <title>The WD40 repeat protein WDR26 binds Gbetagamma and promotes Gbetagamma-dependent signal transduction and leukocyte migration.</title>
        <authorList>
            <person name="Sun Z."/>
            <person name="Tang X."/>
            <person name="Lin F."/>
            <person name="Chen S."/>
        </authorList>
    </citation>
    <scope>FUNCTION</scope>
    <scope>INTERACTION WITH A G-BETA:GAMMA UNIT</scope>
</reference>
<reference key="15">
    <citation type="journal article" date="2011" name="Sci. Signal.">
        <title>System-wide temporal characterization of the proteome and phosphoproteome of human embryonic stem cell differentiation.</title>
        <authorList>
            <person name="Rigbolt K.T."/>
            <person name="Prokhorova T.A."/>
            <person name="Akimov V."/>
            <person name="Henningsen J."/>
            <person name="Johansen P.T."/>
            <person name="Kratchmarova I."/>
            <person name="Kassem M."/>
            <person name="Mann M."/>
            <person name="Olsen J.V."/>
            <person name="Blagoev B."/>
        </authorList>
    </citation>
    <scope>PHOSPHORYLATION [LARGE SCALE ANALYSIS] AT SER-121</scope>
    <scope>IDENTIFICATION BY MASS SPECTROMETRY [LARGE SCALE ANALYSIS]</scope>
</reference>
<reference key="16">
    <citation type="journal article" date="2013" name="J. Biol. Chem.">
        <title>WDR26 functions as a scaffolding protein to promote Gbetagamma-mediated phospholipase C beta2 (PLCbeta2) activation in leukocytes.</title>
        <authorList>
            <person name="Sun Z."/>
            <person name="Smrcka A.V."/>
            <person name="Chen S."/>
        </authorList>
    </citation>
    <scope>FUNCTION</scope>
    <scope>SUBUNIT</scope>
    <scope>INTERACTION WITH PLCB2 AND A G-BETA:GAMMA UNIT</scope>
</reference>
<reference key="17">
    <citation type="journal article" date="2013" name="J. Proteome Res.">
        <title>Toward a comprehensive characterization of a human cancer cell phosphoproteome.</title>
        <authorList>
            <person name="Zhou H."/>
            <person name="Di Palma S."/>
            <person name="Preisinger C."/>
            <person name="Peng M."/>
            <person name="Polat A.N."/>
            <person name="Heck A.J."/>
            <person name="Mohammed S."/>
        </authorList>
    </citation>
    <scope>PHOSPHORYLATION [LARGE SCALE ANALYSIS] AT SER-121 AND SER-123</scope>
    <scope>IDENTIFICATION BY MASS SPECTROMETRY [LARGE SCALE ANALYSIS]</scope>
    <source>
        <tissue>Cervix carcinoma</tissue>
        <tissue>Erythroleukemia</tissue>
    </source>
</reference>
<reference key="18">
    <citation type="journal article" date="2014" name="J. Proteomics">
        <title>An enzyme assisted RP-RPLC approach for in-depth analysis of human liver phosphoproteome.</title>
        <authorList>
            <person name="Bian Y."/>
            <person name="Song C."/>
            <person name="Cheng K."/>
            <person name="Dong M."/>
            <person name="Wang F."/>
            <person name="Huang J."/>
            <person name="Sun D."/>
            <person name="Wang L."/>
            <person name="Ye M."/>
            <person name="Zou H."/>
        </authorList>
    </citation>
    <scope>PHOSPHORYLATION [LARGE SCALE ANALYSIS] AT SER-121 AND SER-123</scope>
    <scope>IDENTIFICATION BY MASS SPECTROMETRY [LARGE SCALE ANALYSIS]</scope>
    <source>
        <tissue>Liver</tissue>
    </source>
</reference>
<reference key="19">
    <citation type="journal article" date="2016" name="FEBS Lett.">
        <title>WDR26 is a new partner of Axin1 in the canonical Wnt signaling pathway.</title>
        <authorList>
            <person name="Goto T."/>
            <person name="Matsuzawa J."/>
            <person name="Iemura S."/>
            <person name="Natsume T."/>
            <person name="Shibuya H."/>
        </authorList>
    </citation>
    <scope>INTERACTION WITH AXIN1</scope>
    <scope>FUNCTION</scope>
</reference>
<reference key="20">
    <citation type="journal article" date="2016" name="Oncotarget">
        <title>Upregulated WDR26 serves as a scaffold to coordinate PI3K/ AKT pathway-driven breast cancer cell growth, migration, and invasion.</title>
        <authorList>
            <person name="Ye Y."/>
            <person name="Tang X."/>
            <person name="Sun Z."/>
            <person name="Chen S."/>
        </authorList>
    </citation>
    <scope>FUNCTION</scope>
</reference>
<reference key="21">
    <citation type="journal article" date="2018" name="Elife">
        <title>The multi-subunit GID/CTLH E3 ligase promotes proliferation and targets the transcription factor Hbp1 for degradation.</title>
        <authorList>
            <person name="Lampert F."/>
            <person name="Stafa D."/>
            <person name="Goga A."/>
            <person name="Soste M.V."/>
            <person name="Gilberto S."/>
            <person name="Olieric N."/>
            <person name="Picotti P."/>
            <person name="Stoffel M."/>
            <person name="Peter M."/>
        </authorList>
    </citation>
    <scope>FUNCTION</scope>
    <scope>IDENTIFICATION IN THE CTLH COMPLEX</scope>
    <scope>IDENTIFICATION BY MASS SPECTROMETRY</scope>
    <scope>SUBCELLULAR LOCATION</scope>
</reference>
<reference key="22">
    <citation type="journal article" date="2017" name="Am. J. Hum. Genet.">
        <title>WDR26 haploinsufficiency causes a recognizable syndrome of intellectual disability, seizures, abnormal gait, and distinctive facial features.</title>
        <authorList>
            <person name="Skraban C.M."/>
            <person name="Wells C.F."/>
            <person name="Markose P."/>
            <person name="Cho M.T."/>
            <person name="Nesbitt A.I."/>
            <person name="Au P.Y.B."/>
            <person name="Begtrup A."/>
            <person name="Bernat J.A."/>
            <person name="Bird L.M."/>
            <person name="Cao K."/>
            <person name="de Brouwer A.P.M."/>
            <person name="Denenberg E.H."/>
            <person name="Douglas G."/>
            <person name="Gibson K.M."/>
            <person name="Grand K."/>
            <person name="Goldenberg A."/>
            <person name="Innes A.M."/>
            <person name="Juusola J."/>
            <person name="Kempers M."/>
            <person name="Kinning E."/>
            <person name="Markie D.M."/>
            <person name="Owens M.M."/>
            <person name="Payne K."/>
            <person name="Person R."/>
            <person name="Pfundt R."/>
            <person name="Stocco A."/>
            <person name="Turner C.L.S."/>
            <person name="Verbeek N.E."/>
            <person name="Walsh L.E."/>
            <person name="Warner T.C."/>
            <person name="Wheeler P.G."/>
            <person name="Wieczorek D."/>
            <person name="Wilkens A.B."/>
            <person name="Zonneveld-Huijssoon E."/>
            <person name="Kleefstra T."/>
            <person name="Robertson S.P."/>
            <person name="Santani A."/>
            <person name="van Gassen K.L.I."/>
            <person name="Deardorff M.A."/>
        </authorList>
    </citation>
    <scope>VARIANTS SKDEAS 46-SER--SER-661 DEL; ARG-172; PRO-215; ARG-254; 279-ARG--SER-661 DEL; ASN-284; 426-GLU--SER-661 DEL; 428-TRP--SER-661 DEL AND 524-GLN--SER-661 DEL</scope>
    <scope>CHARACTERIZATION OF VARIANT SKDEAS ASN-284</scope>
</reference>
<organism>
    <name type="scientific">Homo sapiens</name>
    <name type="common">Human</name>
    <dbReference type="NCBI Taxonomy" id="9606"/>
    <lineage>
        <taxon>Eukaryota</taxon>
        <taxon>Metazoa</taxon>
        <taxon>Chordata</taxon>
        <taxon>Craniata</taxon>
        <taxon>Vertebrata</taxon>
        <taxon>Euteleostomi</taxon>
        <taxon>Mammalia</taxon>
        <taxon>Eutheria</taxon>
        <taxon>Euarchontoglires</taxon>
        <taxon>Primates</taxon>
        <taxon>Haplorrhini</taxon>
        <taxon>Catarrhini</taxon>
        <taxon>Hominidae</taxon>
        <taxon>Homo</taxon>
    </lineage>
</organism>
<keyword id="KW-0002">3D-structure</keyword>
<keyword id="KW-0025">Alternative splicing</keyword>
<keyword id="KW-0963">Cytoplasm</keyword>
<keyword id="KW-0225">Disease variant</keyword>
<keyword id="KW-0991">Intellectual disability</keyword>
<keyword id="KW-0496">Mitochondrion</keyword>
<keyword id="KW-0539">Nucleus</keyword>
<keyword id="KW-0597">Phosphoprotein</keyword>
<keyword id="KW-1267">Proteomics identification</keyword>
<keyword id="KW-1185">Reference proteome</keyword>
<keyword id="KW-0677">Repeat</keyword>
<keyword id="KW-0853">WD repeat</keyword>
<gene>
    <name type="primary">WDR26</name>
    <name type="synonym">CDW2</name>
    <name type="synonym">MIP2</name>
    <name type="ORF">PRO0852</name>
</gene>
<comment type="function">
    <text evidence="1 5 7 9 10 11 13">G-beta-like protein involved in cell signal transduction (PubMed:15378603, PubMed:19446606, PubMed:22065575, PubMed:23625927, PubMed:26895380, PubMed:27098453). Acts as a negative regulator in MAPK signaling pathway (PubMed:15378603). Functions as a scaffolding protein to promote G beta:gamma-mediated PLCB2 plasma membrane translocation and subsequent activation in leukocytes (PubMed:22065575, PubMed:23625927). Core component of the CTLH E3 ubiquitin-protein ligase complex that selectively accepts ubiquitin from UBE2H and mediates ubiquitination and subsequent proteasomal degradation of the transcription factor HBP1 (PubMed:29911972). Acts as a negative regulator of the canonical Wnt signaling pathway through preventing ubiquitination of beta-catenin CTNNB1 by the beta-catenin destruction complex, thus negatively regulating CTNNB1 degradation (PubMed:27098453). Serves as a scaffold to coordinate PI3K/AKT pathway-driven cell growth and migration (PubMed:26895380). Protects cells from oxidative stress-induced apoptosis via the down-regulation of AP-1 transcriptional activity as well as by inhibiting cytochrome c release from mitochondria (PubMed:19446606). Also protects cells by promoting hypoxia-mediated autophagy and mitophagy (By similarity).</text>
</comment>
<comment type="subunit">
    <text evidence="6 8 9 11 13">Forms homooligomers (PubMed:23625927). Identified in the CTLH complex that contains GID4, RANBP9 and/or RANBP10, MKLN1, MAEA, RMND5A (or alternatively its paralog RMND5B), GID8, ARMC8, WDR26 and YPEL5 (PubMed:29911972). Within this complex, MAEA, RMND5A (or alternatively its paralog RMND5B), GID8, WDR26, and RANBP9 and/or RANBP10 form the catalytic core, while GID4, MKLN1, ARMC8 and YPEL5 have ancillary roles (PubMed:29911972). Interacts with DDB1-CUL4A/B E3 ligase complexes (PubMed:17041588). Forms a complex composed of at least WDR26, a G-beta:gamma unit, and PLCB2 (PubMed:22065575, PubMed:23625927). Interacts with AXIN1 (PubMed:27098453).</text>
</comment>
<comment type="interaction">
    <interactant intactId="EBI-1046864">
        <id>Q9H7D7</id>
    </interactant>
    <interactant intactId="EBI-710484">
        <id>O15169</id>
        <label>AXIN1</label>
    </interactant>
    <organismsDiffer>false</organismsDiffer>
    <experiments>4</experiments>
</comment>
<comment type="interaction">
    <interactant intactId="EBI-1046864">
        <id>Q9H7D7</id>
    </interactant>
    <interactant intactId="EBI-347281">
        <id>P12755</id>
        <label>SKI</label>
    </interactant>
    <organismsDiffer>false</organismsDiffer>
    <experiments>2</experiments>
</comment>
<comment type="subcellular location">
    <subcellularLocation>
        <location evidence="5">Cytoplasm</location>
    </subcellularLocation>
    <subcellularLocation>
        <location evidence="13">Nucleus</location>
    </subcellularLocation>
    <subcellularLocation>
        <location evidence="1">Mitochondrion</location>
    </subcellularLocation>
</comment>
<comment type="alternative products">
    <event type="alternative splicing"/>
    <isoform>
        <id>Q9H7D7-1</id>
        <name>1</name>
        <sequence type="displayed"/>
    </isoform>
    <isoform>
        <id>Q9H7D7-2</id>
        <name>2</name>
        <sequence type="described" ref="VSP_023895"/>
    </isoform>
    <isoform>
        <id>Q9H7D7-3</id>
        <name>3</name>
        <sequence type="described" ref="VSP_023896 VSP_023898"/>
    </isoform>
    <isoform>
        <id>Q9H7D7-4</id>
        <name>4</name>
        <sequence type="described" ref="VSP_023897 VSP_023899"/>
    </isoform>
</comment>
<comment type="tissue specificity">
    <text evidence="5">Broadly expressed, with highest levels in heart and skeletal muscle.</text>
</comment>
<comment type="induction">
    <text evidence="7">Expression is significantly up-regulated by oxidative stress (PubMed:19446606).</text>
</comment>
<comment type="disease" evidence="12">
    <disease id="DI-05071">
        <name>Skraban-Deardorff syndrome</name>
        <acronym>SKDEAS</acronym>
        <description>An autosomal dominant syndrome characterized by psychomotor developmental delay, intellectual disability with delayed speech, febrile and non-febrile seizures, abnormal gait, and facial dysmorphism. Facial features include a prominent maxilla and upper lip that readily reveal the upper gingiva, widely spaced teeth, and a broad nasal tip.</description>
        <dbReference type="MIM" id="617616"/>
    </disease>
    <text>The disease is caused by variants affecting the gene represented in this entry.</text>
</comment>
<comment type="sequence caution" evidence="17">
    <conflict type="erroneous initiation">
        <sequence resource="EMBL-CDS" id="AAG35477"/>
    </conflict>
    <text>Truncated N-terminus.</text>
</comment>
<comment type="sequence caution" evidence="17">
    <conflict type="erroneous initiation">
        <sequence resource="EMBL-CDS" id="AAH52301"/>
    </conflict>
    <text>Truncated N-terminus.</text>
</comment>
<comment type="sequence caution" evidence="17">
    <conflict type="erroneous initiation">
        <sequence resource="EMBL-CDS" id="AAH63817"/>
    </conflict>
    <text>Truncated N-terminus.</text>
</comment>
<comment type="sequence caution" evidence="17">
    <conflict type="erroneous initiation">
        <sequence resource="EMBL-CDS" id="AAO67709"/>
    </conflict>
    <text>Truncated N-terminus.</text>
</comment>
<comment type="sequence caution" evidence="17">
    <conflict type="erroneous initiation">
        <sequence resource="EMBL-CDS" id="AAQ74770"/>
    </conflict>
    <text>Truncated N-terminus.</text>
</comment>
<comment type="sequence caution" evidence="17">
    <conflict type="erroneous initiation">
        <sequence resource="EMBL-CDS" id="ABK41102"/>
    </conflict>
    <text>Truncated N-terminus.</text>
</comment>
<comment type="sequence caution" evidence="17">
    <conflict type="erroneous termination">
        <sequence resource="EMBL-CDS" id="BAB14955"/>
    </conflict>
    <text>Truncated C-terminus.</text>
</comment>
<comment type="sequence caution" evidence="17">
    <conflict type="erroneous initiation">
        <sequence resource="EMBL-CDS" id="BAD93124"/>
    </conflict>
    <text>Extended N-terminus.</text>
</comment>
<sequence length="661" mass="72124">MQANGAGGGGGGGGGGGGGGGGGGGQGQTPELACLSAQNGESSPSSSSSAGDLAHANGLLPSAPSAASNNSNSLNVNNGVPGGAAAASSATVAAASATTAASSSLATPELGSSLKKKKRLSQSDEDVIRLIGQHLNGLGLNQTVDLLMQESGCRLEHPSATKFRNHVMEGDWDKAENDLNELKPLVHSPHAIVVRGALEISQTLLGIIVRMKFLLLQQKYLEYLEDGKVLEALQVLRCELTPLKYNTERIHVLSGYLMCSHAEDLRAKAEWEGKGTASRSKLLDKLQTYLPPSVMLPPRRLQTLLRQAVELQRDRCLYHNTKLDNNLDSVSLLIDHVCSRRQFPCYTQQILTEHCNEVWFCKFSNDGTKLATGSKDTTVIIWQVDPDTHLLKLLKTLEGHAYGVSYIAWSPDDNYLVACGPDDCSELWLWNVQTGELRTKMSQSHEDSLTSVAWNPDGKRFVTGGQRGQFYQCDLDGNLLDSWEGVRVQCLWCLSDGKTVLASDTHQRIRGYNFEDLTDRNIVQEDHPIMSFTISKNGRLALLNVATQGVHLWDLQDRVLVRKYQGVTQGFYTIHSCFGGHNEDFIASGSEDHKVYIWHKRSELPIAELTGHTRTVNCVSWNPQIPSMMASASDDGTVRIWGPAPFIDHQNIEEECSSMDS</sequence>